<keyword id="KW-0963">Cytoplasm</keyword>
<keyword id="KW-0441">Lipid A biosynthesis</keyword>
<keyword id="KW-0444">Lipid biosynthesis</keyword>
<keyword id="KW-0443">Lipid metabolism</keyword>
<keyword id="KW-0456">Lyase</keyword>
<keyword id="KW-1185">Reference proteome</keyword>
<comment type="function">
    <text evidence="1">Involved in unsaturated fatty acids biosynthesis. Catalyzes the dehydration of short chain beta-hydroxyacyl-ACPs and long chain saturated and unsaturated beta-hydroxyacyl-ACPs.</text>
</comment>
<comment type="catalytic activity">
    <reaction evidence="1">
        <text>a (3R)-hydroxyacyl-[ACP] = a (2E)-enoyl-[ACP] + H2O</text>
        <dbReference type="Rhea" id="RHEA:13097"/>
        <dbReference type="Rhea" id="RHEA-COMP:9925"/>
        <dbReference type="Rhea" id="RHEA-COMP:9945"/>
        <dbReference type="ChEBI" id="CHEBI:15377"/>
        <dbReference type="ChEBI" id="CHEBI:78784"/>
        <dbReference type="ChEBI" id="CHEBI:78827"/>
        <dbReference type="EC" id="4.2.1.59"/>
    </reaction>
</comment>
<comment type="subcellular location">
    <subcellularLocation>
        <location evidence="1">Cytoplasm</location>
    </subcellularLocation>
</comment>
<comment type="similarity">
    <text evidence="1">Belongs to the thioester dehydratase family. FabZ subfamily.</text>
</comment>
<dbReference type="EC" id="4.2.1.59" evidence="1"/>
<dbReference type="EMBL" id="CP001022">
    <property type="protein sequence ID" value="ACB62106.1"/>
    <property type="molecule type" value="Genomic_DNA"/>
</dbReference>
<dbReference type="RefSeq" id="WP_012371522.1">
    <property type="nucleotide sequence ID" value="NC_010556.1"/>
</dbReference>
<dbReference type="SMR" id="B1YMP6"/>
<dbReference type="STRING" id="262543.Exig_2658"/>
<dbReference type="KEGG" id="esi:Exig_2658"/>
<dbReference type="eggNOG" id="COG0764">
    <property type="taxonomic scope" value="Bacteria"/>
</dbReference>
<dbReference type="HOGENOM" id="CLU_078912_3_0_9"/>
<dbReference type="OrthoDB" id="9772788at2"/>
<dbReference type="Proteomes" id="UP000001681">
    <property type="component" value="Chromosome"/>
</dbReference>
<dbReference type="GO" id="GO:0005737">
    <property type="term" value="C:cytoplasm"/>
    <property type="evidence" value="ECO:0007669"/>
    <property type="project" value="UniProtKB-SubCell"/>
</dbReference>
<dbReference type="GO" id="GO:0016020">
    <property type="term" value="C:membrane"/>
    <property type="evidence" value="ECO:0007669"/>
    <property type="project" value="GOC"/>
</dbReference>
<dbReference type="GO" id="GO:0019171">
    <property type="term" value="F:(3R)-hydroxyacyl-[acyl-carrier-protein] dehydratase activity"/>
    <property type="evidence" value="ECO:0007669"/>
    <property type="project" value="UniProtKB-EC"/>
</dbReference>
<dbReference type="GO" id="GO:0006633">
    <property type="term" value="P:fatty acid biosynthetic process"/>
    <property type="evidence" value="ECO:0007669"/>
    <property type="project" value="UniProtKB-UniRule"/>
</dbReference>
<dbReference type="GO" id="GO:0009245">
    <property type="term" value="P:lipid A biosynthetic process"/>
    <property type="evidence" value="ECO:0007669"/>
    <property type="project" value="UniProtKB-UniRule"/>
</dbReference>
<dbReference type="CDD" id="cd01288">
    <property type="entry name" value="FabZ"/>
    <property type="match status" value="1"/>
</dbReference>
<dbReference type="FunFam" id="3.10.129.10:FF:000001">
    <property type="entry name" value="3-hydroxyacyl-[acyl-carrier-protein] dehydratase FabZ"/>
    <property type="match status" value="1"/>
</dbReference>
<dbReference type="Gene3D" id="3.10.129.10">
    <property type="entry name" value="Hotdog Thioesterase"/>
    <property type="match status" value="1"/>
</dbReference>
<dbReference type="HAMAP" id="MF_00406">
    <property type="entry name" value="FabZ"/>
    <property type="match status" value="1"/>
</dbReference>
<dbReference type="InterPro" id="IPR013114">
    <property type="entry name" value="FabA_FabZ"/>
</dbReference>
<dbReference type="InterPro" id="IPR010084">
    <property type="entry name" value="FabZ"/>
</dbReference>
<dbReference type="InterPro" id="IPR029069">
    <property type="entry name" value="HotDog_dom_sf"/>
</dbReference>
<dbReference type="NCBIfam" id="TIGR01750">
    <property type="entry name" value="fabZ"/>
    <property type="match status" value="1"/>
</dbReference>
<dbReference type="NCBIfam" id="NF000582">
    <property type="entry name" value="PRK00006.1"/>
    <property type="match status" value="1"/>
</dbReference>
<dbReference type="PANTHER" id="PTHR30272">
    <property type="entry name" value="3-HYDROXYACYL-[ACYL-CARRIER-PROTEIN] DEHYDRATASE"/>
    <property type="match status" value="1"/>
</dbReference>
<dbReference type="PANTHER" id="PTHR30272:SF1">
    <property type="entry name" value="3-HYDROXYACYL-[ACYL-CARRIER-PROTEIN] DEHYDRATASE"/>
    <property type="match status" value="1"/>
</dbReference>
<dbReference type="Pfam" id="PF07977">
    <property type="entry name" value="FabA"/>
    <property type="match status" value="1"/>
</dbReference>
<dbReference type="SUPFAM" id="SSF54637">
    <property type="entry name" value="Thioesterase/thiol ester dehydrase-isomerase"/>
    <property type="match status" value="1"/>
</dbReference>
<protein>
    <recommendedName>
        <fullName evidence="1">3-hydroxyacyl-[acyl-carrier-protein] dehydratase FabZ</fullName>
        <ecNumber evidence="1">4.2.1.59</ecNumber>
    </recommendedName>
    <alternativeName>
        <fullName evidence="1">(3R)-hydroxymyristoyl-[acyl-carrier-protein] dehydratase</fullName>
        <shortName evidence="1">(3R)-hydroxymyristoyl-ACP dehydrase</shortName>
    </alternativeName>
    <alternativeName>
        <fullName evidence="1">Beta-hydroxyacyl-ACP dehydratase</fullName>
    </alternativeName>
</protein>
<accession>B1YMP6</accession>
<sequence length="140" mass="15593">MYTIEQIKEVIPHRYPFLLVDRILEVEEGKRAVGIKNVTANEEFFNGHFPDYNVMPGVLIVEALAQVGAFAVLKMEQNQGKLAFFAGIENCRFKRQVVPGDQLRLEVELTKLRGPIGKGRATATVDGEVACTAELTFAIK</sequence>
<gene>
    <name evidence="1" type="primary">fabZ</name>
    <name type="ordered locus">Exig_2658</name>
</gene>
<evidence type="ECO:0000255" key="1">
    <source>
        <dbReference type="HAMAP-Rule" id="MF_00406"/>
    </source>
</evidence>
<reference key="1">
    <citation type="submission" date="2008-04" db="EMBL/GenBank/DDBJ databases">
        <title>Complete sequence of chromosome of Exiguobacterium sibiricum 255-15.</title>
        <authorList>
            <consortium name="US DOE Joint Genome Institute"/>
            <person name="Copeland A."/>
            <person name="Lucas S."/>
            <person name="Lapidus A."/>
            <person name="Glavina del Rio T."/>
            <person name="Dalin E."/>
            <person name="Tice H."/>
            <person name="Bruce D."/>
            <person name="Goodwin L."/>
            <person name="Pitluck S."/>
            <person name="Kiss H."/>
            <person name="Chertkov O."/>
            <person name="Monk C."/>
            <person name="Brettin T."/>
            <person name="Detter J.C."/>
            <person name="Han C."/>
            <person name="Kuske C.R."/>
            <person name="Schmutz J."/>
            <person name="Larimer F."/>
            <person name="Land M."/>
            <person name="Hauser L."/>
            <person name="Kyrpides N."/>
            <person name="Mikhailova N."/>
            <person name="Vishnivetskaya T."/>
            <person name="Rodrigues D.F."/>
            <person name="Gilichinsky D."/>
            <person name="Tiedje J."/>
            <person name="Richardson P."/>
        </authorList>
    </citation>
    <scope>NUCLEOTIDE SEQUENCE [LARGE SCALE GENOMIC DNA]</scope>
    <source>
        <strain>DSM 17290 / CCUG 55495 / CIP 109462 / JCM 13490 / 255-15</strain>
    </source>
</reference>
<organism>
    <name type="scientific">Exiguobacterium sibiricum (strain DSM 17290 / CCUG 55495 / CIP 109462 / JCM 13490 / 255-15)</name>
    <dbReference type="NCBI Taxonomy" id="262543"/>
    <lineage>
        <taxon>Bacteria</taxon>
        <taxon>Bacillati</taxon>
        <taxon>Bacillota</taxon>
        <taxon>Bacilli</taxon>
        <taxon>Bacillales</taxon>
        <taxon>Bacillales Family XII. Incertae Sedis</taxon>
        <taxon>Exiguobacterium</taxon>
    </lineage>
</organism>
<proteinExistence type="inferred from homology"/>
<feature type="chain" id="PRO_1000123639" description="3-hydroxyacyl-[acyl-carrier-protein] dehydratase FabZ">
    <location>
        <begin position="1"/>
        <end position="140"/>
    </location>
</feature>
<feature type="active site" evidence="1">
    <location>
        <position position="48"/>
    </location>
</feature>
<name>FABZ_EXIS2</name>